<organism>
    <name type="scientific">Equine herpesvirus 4 (strain 1942)</name>
    <name type="common">EHV-4</name>
    <name type="synonym">Equine rhinopneumonitis virus</name>
    <dbReference type="NCBI Taxonomy" id="10333"/>
    <lineage>
        <taxon>Viruses</taxon>
        <taxon>Duplodnaviria</taxon>
        <taxon>Heunggongvirae</taxon>
        <taxon>Peploviricota</taxon>
        <taxon>Herviviricetes</taxon>
        <taxon>Herpesvirales</taxon>
        <taxon>Orthoherpesviridae</taxon>
        <taxon>Alphaherpesvirinae</taxon>
        <taxon>Varicellovirus</taxon>
        <taxon>Varicellovirus equidalpha4</taxon>
        <taxon>Equid alphaherpesvirus 4</taxon>
    </lineage>
</organism>
<organismHost>
    <name type="scientific">Equus caballus</name>
    <name type="common">Horse</name>
    <dbReference type="NCBI Taxonomy" id="9796"/>
</organismHost>
<feature type="signal peptide" evidence="2">
    <location>
        <begin position="1"/>
        <end position="19"/>
    </location>
</feature>
<feature type="chain" id="PRO_0000038292" description="Envelope glycoprotein G">
    <location>
        <begin position="20"/>
        <end position="405"/>
    </location>
</feature>
<feature type="transmembrane region" description="Helical" evidence="2">
    <location>
        <begin position="389"/>
        <end position="405"/>
    </location>
</feature>
<feature type="glycosylation site" description="N-linked (GlcNAc...) asparagine; by host" evidence="2">
    <location>
        <position position="83"/>
    </location>
</feature>
<feature type="glycosylation site" description="N-linked (GlcNAc...) asparagine; by host" evidence="2">
    <location>
        <position position="138"/>
    </location>
</feature>
<feature type="glycosylation site" description="N-linked (GlcNAc...) asparagine; by host" evidence="2">
    <location>
        <position position="174"/>
    </location>
</feature>
<feature type="glycosylation site" description="N-linked (GlcNAc...) asparagine; by host" evidence="2">
    <location>
        <position position="221"/>
    </location>
</feature>
<feature type="glycosylation site" description="N-linked (GlcNAc...) asparagine; by host" evidence="2">
    <location>
        <position position="288"/>
    </location>
</feature>
<keyword id="KW-0325">Glycoprotein</keyword>
<keyword id="KW-0472">Membrane</keyword>
<keyword id="KW-0732">Signal</keyword>
<keyword id="KW-0812">Transmembrane</keyword>
<keyword id="KW-1133">Transmembrane helix</keyword>
<keyword id="KW-0261">Viral envelope protein</keyword>
<keyword id="KW-0946">Virion</keyword>
<name>GG_EHV4</name>
<dbReference type="EMBL" id="S44796">
    <property type="protein sequence ID" value="AAB23267.1"/>
    <property type="molecule type" value="Genomic_DNA"/>
</dbReference>
<dbReference type="EMBL" id="M89634">
    <property type="protein sequence ID" value="AAA46103.1"/>
    <property type="molecule type" value="Genomic_DNA"/>
</dbReference>
<dbReference type="PIR" id="A43375">
    <property type="entry name" value="VGBEGF"/>
</dbReference>
<dbReference type="GlyCosmos" id="P32650">
    <property type="glycosylation" value="5 sites, No reported glycans"/>
</dbReference>
<dbReference type="GO" id="GO:0016020">
    <property type="term" value="C:membrane"/>
    <property type="evidence" value="ECO:0007669"/>
    <property type="project" value="UniProtKB-KW"/>
</dbReference>
<dbReference type="GO" id="GO:0019031">
    <property type="term" value="C:viral envelope"/>
    <property type="evidence" value="ECO:0007669"/>
    <property type="project" value="UniProtKB-KW"/>
</dbReference>
<dbReference type="GO" id="GO:0055036">
    <property type="term" value="C:virion membrane"/>
    <property type="evidence" value="ECO:0007669"/>
    <property type="project" value="UniProtKB-SubCell"/>
</dbReference>
<dbReference type="Gene3D" id="2.70.230.10">
    <property type="match status" value="1"/>
</dbReference>
<dbReference type="InterPro" id="IPR002896">
    <property type="entry name" value="Herpes_glycop_dom"/>
</dbReference>
<dbReference type="InterPro" id="IPR036179">
    <property type="entry name" value="Ig-like_dom_sf"/>
</dbReference>
<dbReference type="Pfam" id="PF01537">
    <property type="entry name" value="Herpes_glycop_D"/>
    <property type="match status" value="1"/>
</dbReference>
<dbReference type="SUPFAM" id="SSF48726">
    <property type="entry name" value="Immunoglobulin"/>
    <property type="match status" value="1"/>
</dbReference>
<sequence length="405" mass="44804">MLAVGATLCLLSFLTGATGRLAPDDLCYAEPRKTGPMPRSKPKHQPLLFEAPKVALTAESKGCQLILLDPPIDMGYRLEDKINASIAWFFDFGNCRMPIAYREYYDCVGNAIPSPETCDGYSFTLVKTEGVVEFTIVNMSLLLQPGIYDSGSFIYSALLDMDVLTGRVILNVENDTNYPCGMTHGLTADGNINVDETTHTTPHPRAVGCFPELINFDAWENVTFEEMGIPDPNSFLDDESDYPNTMDCYSWDLYTYPKSLKQAEGPQTLLIGAVGLRILAQAWKFVENETYSQHTRTYTRDAKEVDVTQPSPVQADSVLAKKRTSMKNNPIYSEGKPHAKPFSTIDSIHTEGMKNNPVYSESLMLNVQHSDSITTGGVLHGLQDCDNQLKTVYICLALIGLAHVP</sequence>
<evidence type="ECO:0000250" key="1"/>
<evidence type="ECO:0000255" key="2"/>
<evidence type="ECO:0000305" key="3"/>
<accession>P32650</accession>
<proteinExistence type="inferred from homology"/>
<gene>
    <name type="primary">gG</name>
</gene>
<comment type="function">
    <text evidence="1">Chemokine-binding protein that inhibits neutrophils' chemotaxis.</text>
</comment>
<comment type="subcellular location">
    <subcellularLocation>
        <location evidence="3">Virion membrane</location>
        <topology evidence="3">Single-pass type I membrane protein</topology>
    </subcellularLocation>
</comment>
<comment type="similarity">
    <text evidence="3">Belongs to the alphaherpesvirinae glycoprotein G family.</text>
</comment>
<reference key="1">
    <citation type="journal article" date="1992" name="Virology">
        <title>Identification of equine herpesvirus 4 glycoprotein G: a type-specific, secreted glycoprotein.</title>
        <authorList>
            <person name="Crabb B.S."/>
            <person name="Nagesha H.S."/>
            <person name="Studdert M.J."/>
        </authorList>
    </citation>
    <scope>NUCLEOTIDE SEQUENCE [GENOMIC DNA]</scope>
</reference>
<reference key="2">
    <citation type="journal article" date="1993" name="Arch. Virol.">
        <title>Analysis of the nucleotide sequence of five genes at the left end of the unique short region of the equine herpesvirus 4 genome.</title>
        <authorList>
            <person name="Nagesha H.S."/>
            <person name="Studdert M.J."/>
            <person name="Crabb B.S."/>
        </authorList>
    </citation>
    <scope>NUCLEOTIDE SEQUENCE [GENOMIC DNA]</scope>
</reference>
<protein>
    <recommendedName>
        <fullName>Envelope glycoprotein G</fullName>
        <shortName>gG</shortName>
    </recommendedName>
</protein>